<feature type="signal peptide" evidence="5 6 10">
    <location>
        <begin position="1"/>
        <end position="20"/>
    </location>
</feature>
<feature type="chain" id="PRO_5000094188" description="Mannose-binding protein A" evidence="5 6 10">
    <location>
        <begin position="21"/>
        <end position="249"/>
    </location>
</feature>
<feature type="domain" description="Collagen-like" evidence="2">
    <location>
        <begin position="64"/>
        <end position="98"/>
    </location>
</feature>
<feature type="domain" description="C-type lectin" evidence="3">
    <location>
        <begin position="135"/>
        <end position="246"/>
    </location>
</feature>
<feature type="region of interest" description="Disordered" evidence="4">
    <location>
        <begin position="41"/>
        <end position="102"/>
    </location>
</feature>
<feature type="region of interest" description="Calcium-dependent carbohydrate binding" evidence="1">
    <location>
        <begin position="213"/>
        <end position="221"/>
    </location>
</feature>
<feature type="compositionally biased region" description="Basic and acidic residues" evidence="4">
    <location>
        <begin position="48"/>
        <end position="60"/>
    </location>
</feature>
<feature type="binding site" evidence="1">
    <location>
        <position position="189"/>
    </location>
    <ligand>
        <name>Ca(2+)</name>
        <dbReference type="ChEBI" id="CHEBI:29108"/>
        <label>1</label>
    </ligand>
</feature>
<feature type="binding site" evidence="1">
    <location>
        <position position="193"/>
    </location>
    <ligand>
        <name>Ca(2+)</name>
        <dbReference type="ChEBI" id="CHEBI:29108"/>
        <label>1</label>
    </ligand>
</feature>
<feature type="binding site" evidence="1">
    <location>
        <position position="213"/>
    </location>
    <ligand>
        <name>Ca(2+)</name>
        <dbReference type="ChEBI" id="CHEBI:29108"/>
        <label>2</label>
    </ligand>
</feature>
<feature type="binding site" evidence="1">
    <location>
        <position position="215"/>
    </location>
    <ligand>
        <name>Ca(2+)</name>
        <dbReference type="ChEBI" id="CHEBI:29108"/>
        <label>2</label>
    </ligand>
</feature>
<feature type="binding site" evidence="1">
    <location>
        <position position="216"/>
    </location>
    <ligand>
        <name>Ca(2+)</name>
        <dbReference type="ChEBI" id="CHEBI:29108"/>
        <label>1</label>
    </ligand>
</feature>
<feature type="binding site" evidence="1">
    <location>
        <position position="221"/>
    </location>
    <ligand>
        <name>Ca(2+)</name>
        <dbReference type="ChEBI" id="CHEBI:29108"/>
        <label>1</label>
    </ligand>
</feature>
<feature type="binding site" evidence="1">
    <location>
        <position position="221"/>
    </location>
    <ligand>
        <name>Ca(2+)</name>
        <dbReference type="ChEBI" id="CHEBI:29108"/>
        <label>2</label>
    </ligand>
</feature>
<feature type="binding site" evidence="1">
    <location>
        <position position="222"/>
    </location>
    <ligand>
        <name>Ca(2+)</name>
        <dbReference type="ChEBI" id="CHEBI:29108"/>
        <label>1</label>
    </ligand>
</feature>
<feature type="binding site" evidence="1">
    <location>
        <position position="233"/>
    </location>
    <ligand>
        <name>Ca(2+)</name>
        <dbReference type="ChEBI" id="CHEBI:29108"/>
        <label>2</label>
    </ligand>
</feature>
<feature type="binding site" evidence="1">
    <location>
        <position position="234"/>
    </location>
    <ligand>
        <name>Ca(2+)</name>
        <dbReference type="ChEBI" id="CHEBI:29108"/>
        <label>2</label>
    </ligand>
</feature>
<feature type="modified residue" description="4-hydroxyproline" evidence="1">
    <location>
        <position position="54"/>
    </location>
</feature>
<feature type="modified residue" description="5-hydroxylysine" evidence="1">
    <location>
        <position position="55"/>
    </location>
</feature>
<feature type="modified residue" description="5-hydroxylysine" evidence="1">
    <location>
        <position position="58"/>
    </location>
</feature>
<feature type="modified residue" description="4-hydroxyproline" evidence="1">
    <location>
        <position position="61"/>
    </location>
</feature>
<feature type="modified residue" description="4-hydroxyproline" evidence="1">
    <location>
        <position position="72"/>
    </location>
</feature>
<feature type="modified residue" description="4-hydroxyproline" evidence="1">
    <location>
        <position position="78"/>
    </location>
</feature>
<feature type="modified residue" description="4-hydroxyproline" evidence="1">
    <location>
        <position position="89"/>
    </location>
</feature>
<feature type="modified residue" description="5-hydroxylysine" evidence="1">
    <location>
        <position position="90"/>
    </location>
</feature>
<feature type="modified residue" description="5-hydroxylysine" evidence="1">
    <location>
        <position position="93"/>
    </location>
</feature>
<feature type="glycosylation site" description="O-linked (Gal...) hydroxylysine" evidence="1">
    <location>
        <position position="55"/>
    </location>
</feature>
<feature type="glycosylation site" description="O-linked (Gal...) hydroxylysine" evidence="1">
    <location>
        <position position="58"/>
    </location>
</feature>
<feature type="glycosylation site" description="O-linked (Gal...) hydroxylysine" evidence="1">
    <location>
        <position position="90"/>
    </location>
</feature>
<feature type="glycosylation site" description="O-linked (Gal...) hydroxylysine" evidence="1">
    <location>
        <position position="93"/>
    </location>
</feature>
<feature type="disulfide bond" evidence="1 3">
    <location>
        <begin position="156"/>
        <end position="245"/>
    </location>
</feature>
<feature type="disulfide bond" evidence="1 3">
    <location>
        <begin position="223"/>
        <end position="237"/>
    </location>
</feature>
<feature type="sequence variant" evidence="7">
    <original>G</original>
    <variation>C</variation>
    <location>
        <position position="91"/>
    </location>
</feature>
<feature type="sequence conflict" description="In Ref. 3; ABK78780." evidence="14" ref="3">
    <original>LL</original>
    <variation>GV</variation>
    <location>
        <begin position="11"/>
        <end position="12"/>
    </location>
</feature>
<feature type="sequence conflict" description="In Ref. 5; AA sequence." evidence="14" ref="5">
    <original>EIK</original>
    <variation>SIS</variation>
    <location>
        <begin position="21"/>
        <end position="23"/>
    </location>
</feature>
<feature type="sequence conflict" description="In Ref. 6; AAF21018." evidence="14" ref="6">
    <original>P</original>
    <variation>T</variation>
    <location>
        <position position="54"/>
    </location>
</feature>
<evidence type="ECO:0000250" key="1">
    <source>
        <dbReference type="UniProtKB" id="P19999"/>
    </source>
</evidence>
<evidence type="ECO:0000255" key="2"/>
<evidence type="ECO:0000255" key="3">
    <source>
        <dbReference type="PROSITE-ProRule" id="PRU00040"/>
    </source>
</evidence>
<evidence type="ECO:0000256" key="4">
    <source>
        <dbReference type="SAM" id="MobiDB-lite"/>
    </source>
</evidence>
<evidence type="ECO:0000269" key="5">
    <source>
    </source>
</evidence>
<evidence type="ECO:0000269" key="6">
    <source>
    </source>
</evidence>
<evidence type="ECO:0000269" key="7">
    <source>
    </source>
</evidence>
<evidence type="ECO:0000269" key="8">
    <source>
    </source>
</evidence>
<evidence type="ECO:0000269" key="9">
    <source>
    </source>
</evidence>
<evidence type="ECO:0000269" key="10">
    <source>
    </source>
</evidence>
<evidence type="ECO:0000303" key="11">
    <source>
    </source>
</evidence>
<evidence type="ECO:0000303" key="12">
    <source>
    </source>
</evidence>
<evidence type="ECO:0000303" key="13">
    <source>
    </source>
</evidence>
<evidence type="ECO:0000305" key="14"/>
<evidence type="ECO:0000312" key="15">
    <source>
        <dbReference type="EMBL" id="AAF21018.1"/>
    </source>
</evidence>
<evidence type="ECO:0000312" key="16">
    <source>
        <dbReference type="EMBL" id="AAV40945.1"/>
    </source>
</evidence>
<evidence type="ECO:0000312" key="17">
    <source>
        <dbReference type="EMBL" id="ABK78780.1"/>
    </source>
</evidence>
<evidence type="ECO:0000312" key="18">
    <source>
        <dbReference type="EMBL" id="ABZ79702.1"/>
    </source>
</evidence>
<proteinExistence type="evidence at protein level"/>
<accession>Q5U9S1</accession>
<accession>A0SVI9</accession>
<accession>Q9TR19</accession>
<accession>Q9TT24</accession>
<protein>
    <recommendedName>
        <fullName evidence="1">Mannose-binding protein A</fullName>
        <shortName evidence="1">MBP-A</shortName>
    </recommendedName>
    <alternativeName>
        <fullName evidence="13">28 kDa mannan-binding protein monomeric subunit</fullName>
        <shortName evidence="13">pMBP-28</shortName>
    </alternativeName>
    <alternativeName>
        <fullName evidence="11 16">Mannan-binding lectin A</fullName>
        <shortName evidence="11">MBL-A</shortName>
    </alternativeName>
    <alternativeName>
        <fullName evidence="17">Mannose-binding lectin A</fullName>
    </alternativeName>
</protein>
<keyword id="KW-0106">Calcium</keyword>
<keyword id="KW-0176">Collagen</keyword>
<keyword id="KW-1018">Complement activation lectin pathway</keyword>
<keyword id="KW-0180">Complement pathway</keyword>
<keyword id="KW-0903">Direct protein sequencing</keyword>
<keyword id="KW-1015">Disulfide bond</keyword>
<keyword id="KW-0325">Glycoprotein</keyword>
<keyword id="KW-0379">Hydroxylation</keyword>
<keyword id="KW-0391">Immunity</keyword>
<keyword id="KW-0399">Innate immunity</keyword>
<keyword id="KW-0430">Lectin</keyword>
<keyword id="KW-0465">Mannose-binding</keyword>
<keyword id="KW-0479">Metal-binding</keyword>
<keyword id="KW-1185">Reference proteome</keyword>
<keyword id="KW-0677">Repeat</keyword>
<keyword id="KW-0964">Secreted</keyword>
<keyword id="KW-0732">Signal</keyword>
<gene>
    <name evidence="12" type="primary">MBL1</name>
    <name evidence="18" type="synonym">MBL-A</name>
</gene>
<dbReference type="EMBL" id="AY771222">
    <property type="protein sequence ID" value="AAV40945.1"/>
    <property type="molecule type" value="mRNA"/>
</dbReference>
<dbReference type="EMBL" id="EU421730">
    <property type="protein sequence ID" value="ABZ79702.1"/>
    <property type="molecule type" value="mRNA"/>
</dbReference>
<dbReference type="EMBL" id="EF028164">
    <property type="protein sequence ID" value="ABK78780.1"/>
    <property type="molecule type" value="Genomic_DNA"/>
</dbReference>
<dbReference type="EMBL" id="AF208528">
    <property type="protein sequence ID" value="AAF21018.1"/>
    <property type="molecule type" value="Genomic_DNA"/>
</dbReference>
<dbReference type="RefSeq" id="NP_001007195.1">
    <property type="nucleotide sequence ID" value="NM_001007194.3"/>
</dbReference>
<dbReference type="SMR" id="Q5U9S1"/>
<dbReference type="FunCoup" id="Q5U9S1">
    <property type="interactions" value="151"/>
</dbReference>
<dbReference type="GlyCosmos" id="Q5U9S1">
    <property type="glycosylation" value="4 sites, No reported glycans"/>
</dbReference>
<dbReference type="GlyGen" id="Q5U9S1">
    <property type="glycosylation" value="4 sites"/>
</dbReference>
<dbReference type="PaxDb" id="9823-ENSSSCP00000026746"/>
<dbReference type="PeptideAtlas" id="Q5U9S1"/>
<dbReference type="Ensembl" id="ENSSSCT00000094896.1">
    <property type="protein sequence ID" value="ENSSSCP00000077712.1"/>
    <property type="gene ID" value="ENSSSCG00000055445.1"/>
</dbReference>
<dbReference type="Ensembl" id="ENSSSCT00065093535.1">
    <property type="protein sequence ID" value="ENSSSCP00065040925.1"/>
    <property type="gene ID" value="ENSSSCG00065068117.1"/>
</dbReference>
<dbReference type="Ensembl" id="ENSSSCT00070002202.1">
    <property type="protein sequence ID" value="ENSSSCP00070001845.1"/>
    <property type="gene ID" value="ENSSSCG00070001162.1"/>
</dbReference>
<dbReference type="Ensembl" id="ENSSSCT00105072561">
    <property type="protein sequence ID" value="ENSSSCP00105051491"/>
    <property type="gene ID" value="ENSSSCG00105037975"/>
</dbReference>
<dbReference type="Ensembl" id="ENSSSCT00110017810">
    <property type="protein sequence ID" value="ENSSSCP00110012197"/>
    <property type="gene ID" value="ENSSSCG00110009202"/>
</dbReference>
<dbReference type="Ensembl" id="ENSSSCT00115008710">
    <property type="protein sequence ID" value="ENSSSCP00115008181"/>
    <property type="gene ID" value="ENSSSCG00115005065"/>
</dbReference>
<dbReference type="GeneID" id="492276"/>
<dbReference type="KEGG" id="ssc:492276"/>
<dbReference type="CTD" id="17194"/>
<dbReference type="eggNOG" id="KOG4297">
    <property type="taxonomic scope" value="Eukaryota"/>
</dbReference>
<dbReference type="GeneTree" id="ENSGT00940000154368"/>
<dbReference type="HOGENOM" id="CLU_049894_3_0_1"/>
<dbReference type="InParanoid" id="Q5U9S1"/>
<dbReference type="OrthoDB" id="10255512at2759"/>
<dbReference type="TreeFam" id="TF330481"/>
<dbReference type="Proteomes" id="UP000008227">
    <property type="component" value="Chromosome 14"/>
</dbReference>
<dbReference type="Proteomes" id="UP000314985">
    <property type="component" value="Chromosome 14"/>
</dbReference>
<dbReference type="Proteomes" id="UP000694570">
    <property type="component" value="Unplaced"/>
</dbReference>
<dbReference type="Proteomes" id="UP000694571">
    <property type="component" value="Unplaced"/>
</dbReference>
<dbReference type="Proteomes" id="UP000694720">
    <property type="component" value="Unplaced"/>
</dbReference>
<dbReference type="Proteomes" id="UP000694722">
    <property type="component" value="Unplaced"/>
</dbReference>
<dbReference type="Proteomes" id="UP000694723">
    <property type="component" value="Unplaced"/>
</dbReference>
<dbReference type="Proteomes" id="UP000694724">
    <property type="component" value="Unplaced"/>
</dbReference>
<dbReference type="Proteomes" id="UP000694725">
    <property type="component" value="Unplaced"/>
</dbReference>
<dbReference type="Proteomes" id="UP000694726">
    <property type="component" value="Unplaced"/>
</dbReference>
<dbReference type="Proteomes" id="UP000694727">
    <property type="component" value="Unplaced"/>
</dbReference>
<dbReference type="Proteomes" id="UP000694728">
    <property type="component" value="Unplaced"/>
</dbReference>
<dbReference type="GO" id="GO:0005581">
    <property type="term" value="C:collagen trimer"/>
    <property type="evidence" value="ECO:0007669"/>
    <property type="project" value="UniProtKB-KW"/>
</dbReference>
<dbReference type="GO" id="GO:0005615">
    <property type="term" value="C:extracellular space"/>
    <property type="evidence" value="ECO:0000318"/>
    <property type="project" value="GO_Central"/>
</dbReference>
<dbReference type="GO" id="GO:0005771">
    <property type="term" value="C:multivesicular body"/>
    <property type="evidence" value="ECO:0000318"/>
    <property type="project" value="GO_Central"/>
</dbReference>
<dbReference type="GO" id="GO:0005509">
    <property type="term" value="F:calcium ion binding"/>
    <property type="evidence" value="ECO:0000250"/>
    <property type="project" value="UniProtKB"/>
</dbReference>
<dbReference type="GO" id="GO:0120153">
    <property type="term" value="F:calcium-dependent carbohydrate binding"/>
    <property type="evidence" value="ECO:0000250"/>
    <property type="project" value="UniProtKB"/>
</dbReference>
<dbReference type="GO" id="GO:0005537">
    <property type="term" value="F:D-mannose binding"/>
    <property type="evidence" value="ECO:0000250"/>
    <property type="project" value="UniProtKB"/>
</dbReference>
<dbReference type="GO" id="GO:0070492">
    <property type="term" value="F:oligosaccharide binding"/>
    <property type="evidence" value="ECO:0000250"/>
    <property type="project" value="UniProtKB"/>
</dbReference>
<dbReference type="GO" id="GO:0006958">
    <property type="term" value="P:complement activation, classical pathway"/>
    <property type="evidence" value="ECO:0007669"/>
    <property type="project" value="UniProtKB-KW"/>
</dbReference>
<dbReference type="GO" id="GO:0001867">
    <property type="term" value="P:complement activation, lectin pathway"/>
    <property type="evidence" value="ECO:0007669"/>
    <property type="project" value="UniProtKB-KW"/>
</dbReference>
<dbReference type="GO" id="GO:0050766">
    <property type="term" value="P:positive regulation of phagocytosis"/>
    <property type="evidence" value="ECO:0000318"/>
    <property type="project" value="GO_Central"/>
</dbReference>
<dbReference type="GO" id="GO:0070207">
    <property type="term" value="P:protein homotrimerization"/>
    <property type="evidence" value="ECO:0000250"/>
    <property type="project" value="UniProtKB"/>
</dbReference>
<dbReference type="GO" id="GO:0043129">
    <property type="term" value="P:surfactant homeostasis"/>
    <property type="evidence" value="ECO:0000318"/>
    <property type="project" value="GO_Central"/>
</dbReference>
<dbReference type="CDD" id="cd03591">
    <property type="entry name" value="CLECT_collectin_like"/>
    <property type="match status" value="1"/>
</dbReference>
<dbReference type="FunFam" id="3.10.100.10:FF:000088">
    <property type="entry name" value="Mannose-binding protein A"/>
    <property type="match status" value="1"/>
</dbReference>
<dbReference type="Gene3D" id="3.10.100.10">
    <property type="entry name" value="Mannose-Binding Protein A, subunit A"/>
    <property type="match status" value="1"/>
</dbReference>
<dbReference type="InterPro" id="IPR001304">
    <property type="entry name" value="C-type_lectin-like"/>
</dbReference>
<dbReference type="InterPro" id="IPR016186">
    <property type="entry name" value="C-type_lectin-like/link_sf"/>
</dbReference>
<dbReference type="InterPro" id="IPR018378">
    <property type="entry name" value="C-type_lectin_CS"/>
</dbReference>
<dbReference type="InterPro" id="IPR051077">
    <property type="entry name" value="Ca-dependent_lectin"/>
</dbReference>
<dbReference type="InterPro" id="IPR008160">
    <property type="entry name" value="Collagen"/>
</dbReference>
<dbReference type="InterPro" id="IPR033990">
    <property type="entry name" value="Collectin_CTLD"/>
</dbReference>
<dbReference type="InterPro" id="IPR016187">
    <property type="entry name" value="CTDL_fold"/>
</dbReference>
<dbReference type="PANTHER" id="PTHR24024:SF35">
    <property type="entry name" value="MANNOSE-BINDING PROTEIN A"/>
    <property type="match status" value="1"/>
</dbReference>
<dbReference type="PANTHER" id="PTHR24024">
    <property type="entry name" value="PULMONARY SURFACTANT-ASSOCIATED PROTEIN A"/>
    <property type="match status" value="1"/>
</dbReference>
<dbReference type="Pfam" id="PF01391">
    <property type="entry name" value="Collagen"/>
    <property type="match status" value="1"/>
</dbReference>
<dbReference type="Pfam" id="PF00059">
    <property type="entry name" value="Lectin_C"/>
    <property type="match status" value="1"/>
</dbReference>
<dbReference type="SMART" id="SM00034">
    <property type="entry name" value="CLECT"/>
    <property type="match status" value="1"/>
</dbReference>
<dbReference type="SUPFAM" id="SSF56436">
    <property type="entry name" value="C-type lectin-like"/>
    <property type="match status" value="1"/>
</dbReference>
<dbReference type="PROSITE" id="PS00615">
    <property type="entry name" value="C_TYPE_LECTIN_1"/>
    <property type="match status" value="1"/>
</dbReference>
<dbReference type="PROSITE" id="PS50041">
    <property type="entry name" value="C_TYPE_LECTIN_2"/>
    <property type="match status" value="1"/>
</dbReference>
<reference evidence="14 16" key="1">
    <citation type="journal article" date="2006" name="Dev. Comp. Immunol.">
        <title>Porcine mannan-binding lectin A binds to Actinobacillus suis and Haemophilus parasuis.</title>
        <authorList>
            <person name="Lillie B.N."/>
            <person name="Hammermueller J.D."/>
            <person name="Macinnes J.I."/>
            <person name="Jacques M."/>
            <person name="Hayes M.A."/>
        </authorList>
    </citation>
    <scope>NUCLEOTIDE SEQUENCE [MRNA]</scope>
    <scope>PROTEIN SEQUENCE OF 21-41; 33-39; 106-114 AND 154-165</scope>
    <scope>FUNCTION</scope>
    <scope>SUBCELLULAR LOCATION</scope>
    <scope>TISSUE SPECIFICITY</scope>
    <source>
        <tissue evidence="16">Liver</tissue>
        <tissue evidence="5">Plasma</tissue>
    </source>
</reference>
<reference evidence="18" key="2">
    <citation type="submission" date="2008-01" db="EMBL/GenBank/DDBJ databases">
        <title>Genetic analysis of mannan-binding lectin A from Landrace of China.</title>
        <authorList>
            <person name="Yao X."/>
            <person name="Liu Y.-F."/>
            <person name="Liu H.-Y."/>
        </authorList>
    </citation>
    <scope>NUCLEOTIDE SEQUENCE [MRNA]</scope>
    <source>
        <strain evidence="18">Landrace</strain>
        <tissue evidence="18">Liver</tissue>
    </source>
</reference>
<reference evidence="14 17" key="3">
    <citation type="journal article" date="2007" name="Dev. Comp. Immunol.">
        <title>Gene polymorphisms associated with reduced hepatic expression of porcine mannan-binding lectin C.</title>
        <authorList>
            <person name="Lillie B.N."/>
            <person name="Keirstead N.D."/>
            <person name="Squires E.J."/>
            <person name="Hayes M.A."/>
        </authorList>
    </citation>
    <scope>NUCLEOTIDE SEQUENCE [GENOMIC DNA] OF 1-30</scope>
    <scope>TISSUE SPECIFICITY</scope>
    <source>
        <strain evidence="8">Landrace</strain>
    </source>
</reference>
<reference evidence="14" key="4">
    <citation type="journal article" date="1996" name="Scand. J. Immunol.">
        <title>Isolation and characterization of porcine mannan-binding proteins of different size and ultrastructure.</title>
        <authorList>
            <person name="Storgaard P."/>
            <person name="Nielsen E.H."/>
            <person name="Andersen O."/>
            <person name="Skriver E."/>
            <person name="Mortensen H."/>
            <person name="Hojrup P."/>
            <person name="Leslie G."/>
            <person name="Holmskow U."/>
            <person name="Svehag S.E."/>
        </authorList>
    </citation>
    <scope>PROTEIN SEQUENCE OF 21-44</scope>
    <scope>FUNCTION</scope>
    <scope>SUBUNIT</scope>
    <source>
        <tissue evidence="10">Serum</tissue>
    </source>
</reference>
<reference evidence="14" key="5">
    <citation type="journal article" date="2006" name="Immunogenetics">
        <title>Identification and characterization of porcine mannan-binding lectin A (pMBL-A), and determination of serum concentration heritability.</title>
        <authorList>
            <person name="Juul-Madsen H.R."/>
            <person name="Krogh-Meibom T."/>
            <person name="Henryon M."/>
            <person name="Palaniyar N."/>
            <person name="Heegaard P.M."/>
            <person name="Purup S."/>
            <person name="Willis A.C."/>
            <person name="Tornoe I."/>
            <person name="Ingvartsen K.L."/>
            <person name="Hansen S."/>
            <person name="Holmskov U."/>
        </authorList>
    </citation>
    <scope>PROTEIN SEQUENCE OF 21-35</scope>
    <scope>FUNCTION</scope>
    <scope>SUBUNIT</scope>
    <scope>SUBCELLULAR LOCATION</scope>
    <scope>TISSUE SPECIFICITY</scope>
    <source>
        <tissue evidence="6">Serum</tissue>
    </source>
</reference>
<reference evidence="15" key="6">
    <citation type="journal article" date="2000" name="J. Anim. Sci.">
        <title>Mapping of the Mannose-Binding Lectin 2 (MBL2) gene to pig chromosome 14.</title>
        <authorList>
            <person name="Marklund L."/>
            <person name="Shi X."/>
            <person name="Tuggle C.K."/>
        </authorList>
    </citation>
    <scope>NUCLEOTIDE SEQUENCE [GENOMIC DNA] OF 54-84</scope>
</reference>
<reference evidence="14" key="7">
    <citation type="journal article" date="2007" name="Int. J. Immunogenet.">
        <title>Molecular genetic analysis of porcine mannose-binding lectin genes, MBL1 and MBL2, and their association with complement activity.</title>
        <authorList>
            <person name="Phatsara C."/>
            <person name="Jennen D.G."/>
            <person name="Ponsuksili S."/>
            <person name="Murani E."/>
            <person name="Tesfaye D."/>
            <person name="Schellander K."/>
            <person name="Wimmers K."/>
        </authorList>
    </citation>
    <scope>FUNCTION</scope>
    <scope>TISSUE SPECIFICITY</scope>
</reference>
<reference evidence="14" key="8">
    <citation type="journal article" date="2006" name="Immunogenetics">
        <title>Single-nucleotide polymorphisms in porcine mannan-binding lectin A.</title>
        <authorList>
            <person name="Lillie B.N."/>
            <person name="Keirstead N.D."/>
            <person name="Squires E.J."/>
            <person name="Hayes M.A."/>
        </authorList>
    </citation>
    <scope>VARIANT CYS-91</scope>
</reference>
<sequence length="249" mass="26489">MLLFSSLPVLLLCVVTASYSEIKTCEDAQKTCSVITCGIPVTNGTPGRDGRDGPKGEKGEPGPGFRGSQGPPGKMGPPGNIGETGPLGPKGQKGDPGDTSGVEAKLANLEGQIRILKSELDHVKKLQTFSLGKKSRKKLYVTNGEMMPFSKVKTLCAELQATVATPKNAEENKAIQDMAPDVAFLGITDEVTEGQFMYVTGGRMTYSNWKSNEPNDHGSGEDCVILQRDGLWNDISCSSSFLAVCEFPA</sequence>
<organism>
    <name type="scientific">Sus scrofa</name>
    <name type="common">Pig</name>
    <dbReference type="NCBI Taxonomy" id="9823"/>
    <lineage>
        <taxon>Eukaryota</taxon>
        <taxon>Metazoa</taxon>
        <taxon>Chordata</taxon>
        <taxon>Craniata</taxon>
        <taxon>Vertebrata</taxon>
        <taxon>Euteleostomi</taxon>
        <taxon>Mammalia</taxon>
        <taxon>Eutheria</taxon>
        <taxon>Laurasiatheria</taxon>
        <taxon>Artiodactyla</taxon>
        <taxon>Suina</taxon>
        <taxon>Suidae</taxon>
        <taxon>Sus</taxon>
    </lineage>
</organism>
<name>MBL1_PIG</name>
<comment type="function">
    <text evidence="5 6 9 10">Calcium-dependent lectin. Plays a role in the innate immune response by binding mannose, fucose and N-acetylglucosamine on bacteria, including strains of A.suis, H.parasuis and A.pleuropneumoniae, and activates the lectin complement pathway. According to some authors, it only binds mannose (PubMed:8602463).</text>
</comment>
<comment type="subunit">
    <text evidence="1 6 10">Interacts with MASP1 and MASP2 (By similarity). Forms oligomeric complexes of 3, 4, 5 or, predominantly, 6 homotrimers. The homotrimers appear as globular heads that are connected to a central hub by thin stalks.</text>
</comment>
<comment type="subcellular location">
    <subcellularLocation>
        <location evidence="5 6">Secreted</location>
    </subcellularLocation>
</comment>
<comment type="tissue specificity">
    <text evidence="5 6 8 9">Detected in blood serum (at protein level) (PubMed:16480769, PubMed:16518621). Expressed in liver. Weakly expressed in lung, testis and brain. Not detected in bone marrow and heart.</text>
</comment>
<comment type="domain">
    <text evidence="1">The helical collagen-like domains from three protein chains assemble into a coiled coil and mediate trimerization.</text>
</comment>
<comment type="PTM">
    <text evidence="1">Hydroxylated on lysine and proline residues within the collagen-like domain.</text>
</comment>
<comment type="PTM">
    <text evidence="1">O-glycosylated. O-linked glycans on hydroxylysine residues consist of Glc-Gal disaccharides bound to the oxygen atom of post-translationally added hydroxyl groups.</text>
</comment>
<comment type="caution">
    <text evidence="14">Incorrectly identified as MBL2 by PubMed:11063327.</text>
</comment>